<accession>B4TV61</accession>
<protein>
    <recommendedName>
        <fullName evidence="1">Protein SprT</fullName>
    </recommendedName>
</protein>
<reference key="1">
    <citation type="journal article" date="2011" name="J. Bacteriol.">
        <title>Comparative genomics of 28 Salmonella enterica isolates: evidence for CRISPR-mediated adaptive sublineage evolution.</title>
        <authorList>
            <person name="Fricke W.F."/>
            <person name="Mammel M.K."/>
            <person name="McDermott P.F."/>
            <person name="Tartera C."/>
            <person name="White D.G."/>
            <person name="Leclerc J.E."/>
            <person name="Ravel J."/>
            <person name="Cebula T.A."/>
        </authorList>
    </citation>
    <scope>NUCLEOTIDE SEQUENCE [LARGE SCALE GENOMIC DNA]</scope>
    <source>
        <strain>CVM19633</strain>
    </source>
</reference>
<gene>
    <name evidence="1" type="primary">sprT</name>
    <name type="ordered locus">SeSA_A3266</name>
</gene>
<evidence type="ECO:0000255" key="1">
    <source>
        <dbReference type="HAMAP-Rule" id="MF_00746"/>
    </source>
</evidence>
<organism>
    <name type="scientific">Salmonella schwarzengrund (strain CVM19633)</name>
    <dbReference type="NCBI Taxonomy" id="439843"/>
    <lineage>
        <taxon>Bacteria</taxon>
        <taxon>Pseudomonadati</taxon>
        <taxon>Pseudomonadota</taxon>
        <taxon>Gammaproteobacteria</taxon>
        <taxon>Enterobacterales</taxon>
        <taxon>Enterobacteriaceae</taxon>
        <taxon>Salmonella</taxon>
    </lineage>
</organism>
<keyword id="KW-0963">Cytoplasm</keyword>
<keyword id="KW-0479">Metal-binding</keyword>
<keyword id="KW-0862">Zinc</keyword>
<name>SPRT_SALSV</name>
<comment type="cofactor">
    <cofactor evidence="1">
        <name>Zn(2+)</name>
        <dbReference type="ChEBI" id="CHEBI:29105"/>
    </cofactor>
    <text evidence="1">Binds 1 zinc ion.</text>
</comment>
<comment type="subcellular location">
    <subcellularLocation>
        <location evidence="1">Cytoplasm</location>
    </subcellularLocation>
</comment>
<comment type="similarity">
    <text evidence="1">Belongs to the SprT family.</text>
</comment>
<dbReference type="EMBL" id="CP001127">
    <property type="protein sequence ID" value="ACF92880.1"/>
    <property type="molecule type" value="Genomic_DNA"/>
</dbReference>
<dbReference type="RefSeq" id="WP_000856775.1">
    <property type="nucleotide sequence ID" value="NC_011094.1"/>
</dbReference>
<dbReference type="KEGG" id="sew:SeSA_A3266"/>
<dbReference type="HOGENOM" id="CLU_113336_0_1_6"/>
<dbReference type="Proteomes" id="UP000001865">
    <property type="component" value="Chromosome"/>
</dbReference>
<dbReference type="GO" id="GO:0005737">
    <property type="term" value="C:cytoplasm"/>
    <property type="evidence" value="ECO:0007669"/>
    <property type="project" value="UniProtKB-SubCell"/>
</dbReference>
<dbReference type="GO" id="GO:0008270">
    <property type="term" value="F:zinc ion binding"/>
    <property type="evidence" value="ECO:0007669"/>
    <property type="project" value="UniProtKB-UniRule"/>
</dbReference>
<dbReference type="GO" id="GO:0006950">
    <property type="term" value="P:response to stress"/>
    <property type="evidence" value="ECO:0007669"/>
    <property type="project" value="UniProtKB-ARBA"/>
</dbReference>
<dbReference type="HAMAP" id="MF_00746">
    <property type="entry name" value="SprT"/>
    <property type="match status" value="1"/>
</dbReference>
<dbReference type="InterPro" id="IPR006640">
    <property type="entry name" value="SprT-like_domain"/>
</dbReference>
<dbReference type="InterPro" id="IPR035240">
    <property type="entry name" value="SprT_Zn_ribbon"/>
</dbReference>
<dbReference type="InterPro" id="IPR023483">
    <property type="entry name" value="Uncharacterised_SprT"/>
</dbReference>
<dbReference type="NCBIfam" id="NF003421">
    <property type="entry name" value="PRK04860.1"/>
    <property type="match status" value="1"/>
</dbReference>
<dbReference type="PANTHER" id="PTHR38773">
    <property type="entry name" value="PROTEIN SPRT"/>
    <property type="match status" value="1"/>
</dbReference>
<dbReference type="PANTHER" id="PTHR38773:SF1">
    <property type="entry name" value="PROTEIN SPRT"/>
    <property type="match status" value="1"/>
</dbReference>
<dbReference type="Pfam" id="PF10263">
    <property type="entry name" value="SprT-like"/>
    <property type="match status" value="1"/>
</dbReference>
<dbReference type="Pfam" id="PF17283">
    <property type="entry name" value="Zn_ribbon_SprT"/>
    <property type="match status" value="1"/>
</dbReference>
<dbReference type="SMART" id="SM00731">
    <property type="entry name" value="SprT"/>
    <property type="match status" value="1"/>
</dbReference>
<dbReference type="PROSITE" id="PS00142">
    <property type="entry name" value="ZINC_PROTEASE"/>
    <property type="match status" value="1"/>
</dbReference>
<proteinExistence type="inferred from homology"/>
<feature type="chain" id="PRO_1000133255" description="Protein SprT">
    <location>
        <begin position="1"/>
        <end position="165"/>
    </location>
</feature>
<feature type="domain" description="SprT-like" evidence="1">
    <location>
        <begin position="22"/>
        <end position="163"/>
    </location>
</feature>
<feature type="active site" evidence="1">
    <location>
        <position position="79"/>
    </location>
</feature>
<feature type="binding site" evidence="1">
    <location>
        <position position="78"/>
    </location>
    <ligand>
        <name>Zn(2+)</name>
        <dbReference type="ChEBI" id="CHEBI:29105"/>
    </ligand>
</feature>
<feature type="binding site" evidence="1">
    <location>
        <position position="82"/>
    </location>
    <ligand>
        <name>Zn(2+)</name>
        <dbReference type="ChEBI" id="CHEBI:29105"/>
    </ligand>
</feature>
<sequence length="165" mass="19243">MKTPRLPIAIQQAVMRRLRENLAQANLKLDRHYPEPKLVYTQRGTSAGTAWLESYEIRLNPVLLLENIDTFIAEVVPHELAHLLVWKHFGRKAPHGKEWKWMMESVLGVPARRTHQFALQSVRRNTFPYHCQCQQHQLTVRRHNRVVRGEAVYRCVHCGEPLVAG</sequence>